<protein>
    <recommendedName>
        <fullName>Tyrosine-protein kinase Dnt</fullName>
        <ecNumber>2.7.10.1</ecNumber>
    </recommendedName>
    <alternativeName>
        <fullName>Protein doughnut</fullName>
    </alternativeName>
</protein>
<evidence type="ECO:0000250" key="1"/>
<evidence type="ECO:0000255" key="2"/>
<evidence type="ECO:0000255" key="3">
    <source>
        <dbReference type="PROSITE-ProRule" id="PRU00159"/>
    </source>
</evidence>
<evidence type="ECO:0000255" key="4">
    <source>
        <dbReference type="PROSITE-ProRule" id="PRU00222"/>
    </source>
</evidence>
<evidence type="ECO:0000255" key="5">
    <source>
        <dbReference type="PROSITE-ProRule" id="PRU10028"/>
    </source>
</evidence>
<evidence type="ECO:0000256" key="6">
    <source>
        <dbReference type="SAM" id="MobiDB-lite"/>
    </source>
</evidence>
<evidence type="ECO:0000269" key="7">
    <source>
    </source>
</evidence>
<evidence type="ECO:0000269" key="8">
    <source>
    </source>
</evidence>
<evidence type="ECO:0000305" key="9"/>
<sequence length="584" mass="64938">MESVNKCGKSASTRNCTVKMSRKMWVLSLLALAALQLHSGSEVAAHLNVFLNPVEVMRLLGVSAEVYYVREGHINNYALNFIVPVPANVKDISFTWQSLAGRGLPYSINVVSSDQEVLPRPAINVSHSGEIPTTIQTWSIALKCSGLKAAEVDVTVSLEVVLNRSLNNVTHLVFRRKKICLMNDSAEDLSEDVDDPQLLETVMLPPTGLITLVVGVSVAMGSVCLLLMIAYCVKGAANKRQHHQHGGQPMRTSSFQRLNTHPPCQSSMGSAAYMTPSIIAPIHGSSLPRKVPVSVEQQHPEELHRRISELTVERCRVRLSSLLQEGTFGRVYRGTYNDTQDVLVKTVAQHASQMQVLLLLQEGMLLYGASHPGILSVLGVSIEDHTTPFVLYPALNNTRNLKQFLLDPACARTVTTIQIVMMASQLSMALDHLHSHGVVHKDIATRNCVIDDQLRVKLSDSSLSRDLFPSDYNCLGDSENRPVKWMSLEALQHKQFSEASDSWAFGVLMWELCTSAKQPYAEVDPFEMEHYLKDGYRLAQPFNCPDELFTIMAYCWALLPAERPTFAQLQSCLSEFYSQITRYV</sequence>
<proteinExistence type="evidence at transcript level"/>
<dbReference type="EC" id="2.7.10.1"/>
<dbReference type="EMBL" id="AJ224361">
    <property type="protein sequence ID" value="CAA11918.1"/>
    <property type="status" value="ALT_INIT"/>
    <property type="molecule type" value="mRNA"/>
</dbReference>
<dbReference type="EMBL" id="AF123572">
    <property type="protein sequence ID" value="AAD31179.1"/>
    <property type="status" value="ALT_INIT"/>
    <property type="molecule type" value="mRNA"/>
</dbReference>
<dbReference type="EMBL" id="AE014134">
    <property type="protein sequence ID" value="AAF53783.2"/>
    <property type="molecule type" value="Genomic_DNA"/>
</dbReference>
<dbReference type="EMBL" id="BT021239">
    <property type="protein sequence ID" value="AAX33387.1"/>
    <property type="molecule type" value="mRNA"/>
</dbReference>
<dbReference type="EMBL" id="BT057997">
    <property type="protein sequence ID" value="ACM16707.1"/>
    <property type="molecule type" value="mRNA"/>
</dbReference>
<dbReference type="EMBL" id="AY058760">
    <property type="protein sequence ID" value="AAL13989.1"/>
    <property type="molecule type" value="mRNA"/>
</dbReference>
<dbReference type="RefSeq" id="NP_001260567.1">
    <property type="nucleotide sequence ID" value="NM_001273638.1"/>
</dbReference>
<dbReference type="RefSeq" id="NP_477341.2">
    <property type="nucleotide sequence ID" value="NM_057993.4"/>
</dbReference>
<dbReference type="SMR" id="Q9V422"/>
<dbReference type="BioGRID" id="61188">
    <property type="interactions" value="6"/>
</dbReference>
<dbReference type="DIP" id="DIP-20351N"/>
<dbReference type="FunCoup" id="Q9V422">
    <property type="interactions" value="213"/>
</dbReference>
<dbReference type="STRING" id="7227.FBpp0307787"/>
<dbReference type="GlyCosmos" id="Q9V422">
    <property type="glycosylation" value="4 sites, No reported glycans"/>
</dbReference>
<dbReference type="GlyGen" id="Q9V422">
    <property type="glycosylation" value="4 sites"/>
</dbReference>
<dbReference type="PaxDb" id="7227-FBpp0080765"/>
<dbReference type="DNASU" id="35207"/>
<dbReference type="EnsemblMetazoa" id="FBtr0081224">
    <property type="protein sequence ID" value="FBpp0080765"/>
    <property type="gene ID" value="FBgn0024245"/>
</dbReference>
<dbReference type="EnsemblMetazoa" id="FBtr0336820">
    <property type="protein sequence ID" value="FBpp0307787"/>
    <property type="gene ID" value="FBgn0024245"/>
</dbReference>
<dbReference type="GeneID" id="35207"/>
<dbReference type="KEGG" id="dme:Dmel_CG17559"/>
<dbReference type="AGR" id="FB:FBgn0024245"/>
<dbReference type="CTD" id="35207"/>
<dbReference type="FlyBase" id="FBgn0024245">
    <property type="gene designation" value="dnt"/>
</dbReference>
<dbReference type="VEuPathDB" id="VectorBase:FBgn0024245"/>
<dbReference type="eggNOG" id="KOG1024">
    <property type="taxonomic scope" value="Eukaryota"/>
</dbReference>
<dbReference type="GeneTree" id="ENSGT00940000172861"/>
<dbReference type="HOGENOM" id="CLU_000288_7_36_1"/>
<dbReference type="InParanoid" id="Q9V422"/>
<dbReference type="OMA" id="YCWAMSA"/>
<dbReference type="OrthoDB" id="535945at2759"/>
<dbReference type="PhylomeDB" id="Q9V422"/>
<dbReference type="Reactome" id="R-DME-201681">
    <property type="pathway name" value="TCF dependent signaling in response to WNT"/>
</dbReference>
<dbReference type="BioGRID-ORCS" id="35207">
    <property type="hits" value="0 hits in 3 CRISPR screens"/>
</dbReference>
<dbReference type="GenomeRNAi" id="35207"/>
<dbReference type="PRO" id="PR:Q9V422"/>
<dbReference type="Proteomes" id="UP000000803">
    <property type="component" value="Chromosome 2L"/>
</dbReference>
<dbReference type="Bgee" id="FBgn0024245">
    <property type="expression patterns" value="Expressed in interfollicle cell in ovary and 44 other cell types or tissues"/>
</dbReference>
<dbReference type="ExpressionAtlas" id="Q9V422">
    <property type="expression patterns" value="baseline and differential"/>
</dbReference>
<dbReference type="GO" id="GO:0005886">
    <property type="term" value="C:plasma membrane"/>
    <property type="evidence" value="ECO:0000318"/>
    <property type="project" value="GO_Central"/>
</dbReference>
<dbReference type="GO" id="GO:0043235">
    <property type="term" value="C:receptor complex"/>
    <property type="evidence" value="ECO:0000314"/>
    <property type="project" value="FlyBase"/>
</dbReference>
<dbReference type="GO" id="GO:0005524">
    <property type="term" value="F:ATP binding"/>
    <property type="evidence" value="ECO:0007669"/>
    <property type="project" value="UniProtKB-KW"/>
</dbReference>
<dbReference type="GO" id="GO:0016301">
    <property type="term" value="F:kinase activity"/>
    <property type="evidence" value="ECO:0007669"/>
    <property type="project" value="UniProtKB-KW"/>
</dbReference>
<dbReference type="GO" id="GO:0046982">
    <property type="term" value="F:protein heterodimerization activity"/>
    <property type="evidence" value="ECO:0000353"/>
    <property type="project" value="FlyBase"/>
</dbReference>
<dbReference type="GO" id="GO:0007411">
    <property type="term" value="P:axon guidance"/>
    <property type="evidence" value="ECO:0000315"/>
    <property type="project" value="UniProtKB"/>
</dbReference>
<dbReference type="GO" id="GO:0007409">
    <property type="term" value="P:axonogenesis"/>
    <property type="evidence" value="ECO:0000318"/>
    <property type="project" value="GO_Central"/>
</dbReference>
<dbReference type="GO" id="GO:0007169">
    <property type="term" value="P:cell surface receptor protein tyrosine kinase signaling pathway"/>
    <property type="evidence" value="ECO:0000318"/>
    <property type="project" value="GO_Central"/>
</dbReference>
<dbReference type="GO" id="GO:0016204">
    <property type="term" value="P:determination of muscle attachment site"/>
    <property type="evidence" value="ECO:0000315"/>
    <property type="project" value="FlyBase"/>
</dbReference>
<dbReference type="GO" id="GO:0016203">
    <property type="term" value="P:muscle attachment"/>
    <property type="evidence" value="ECO:0000315"/>
    <property type="project" value="UniProtKB"/>
</dbReference>
<dbReference type="GO" id="GO:0010976">
    <property type="term" value="P:positive regulation of neuron projection development"/>
    <property type="evidence" value="ECO:0000318"/>
    <property type="project" value="GO_Central"/>
</dbReference>
<dbReference type="GO" id="GO:0051897">
    <property type="term" value="P:positive regulation of phosphatidylinositol 3-kinase/protein kinase B signal transduction"/>
    <property type="evidence" value="ECO:0000318"/>
    <property type="project" value="GO_Central"/>
</dbReference>
<dbReference type="GO" id="GO:0007435">
    <property type="term" value="P:salivary gland morphogenesis"/>
    <property type="evidence" value="ECO:0000315"/>
    <property type="project" value="FlyBase"/>
</dbReference>
<dbReference type="GO" id="GO:0007165">
    <property type="term" value="P:signal transduction"/>
    <property type="evidence" value="ECO:0000315"/>
    <property type="project" value="UniProtKB"/>
</dbReference>
<dbReference type="FunFam" id="3.30.200.20:FF:000502">
    <property type="entry name" value="Tyrosine-protein kinase Drl"/>
    <property type="match status" value="1"/>
</dbReference>
<dbReference type="FunFam" id="2.60.40.2170:FF:000005">
    <property type="entry name" value="tyrosine-protein kinase Drl"/>
    <property type="match status" value="1"/>
</dbReference>
<dbReference type="FunFam" id="1.10.510.10:FF:000165">
    <property type="entry name" value="Tyrosine-protein kinase RYK"/>
    <property type="match status" value="1"/>
</dbReference>
<dbReference type="Gene3D" id="3.30.200.20">
    <property type="entry name" value="Phosphorylase Kinase, domain 1"/>
    <property type="match status" value="1"/>
</dbReference>
<dbReference type="Gene3D" id="1.10.510.10">
    <property type="entry name" value="Transferase(Phosphotransferase) domain 1"/>
    <property type="match status" value="1"/>
</dbReference>
<dbReference type="Gene3D" id="2.60.40.2170">
    <property type="entry name" value="Wnt, WIF domain"/>
    <property type="match status" value="1"/>
</dbReference>
<dbReference type="InterPro" id="IPR011009">
    <property type="entry name" value="Kinase-like_dom_sf"/>
</dbReference>
<dbReference type="InterPro" id="IPR000719">
    <property type="entry name" value="Prot_kinase_dom"/>
</dbReference>
<dbReference type="InterPro" id="IPR050122">
    <property type="entry name" value="RTK"/>
</dbReference>
<dbReference type="InterPro" id="IPR001245">
    <property type="entry name" value="Ser-Thr/Tyr_kinase_cat_dom"/>
</dbReference>
<dbReference type="InterPro" id="IPR008266">
    <property type="entry name" value="Tyr_kinase_AS"/>
</dbReference>
<dbReference type="InterPro" id="IPR003306">
    <property type="entry name" value="WIF"/>
</dbReference>
<dbReference type="InterPro" id="IPR038677">
    <property type="entry name" value="WIF_sf"/>
</dbReference>
<dbReference type="PANTHER" id="PTHR24416">
    <property type="entry name" value="TYROSINE-PROTEIN KINASE RECEPTOR"/>
    <property type="match status" value="1"/>
</dbReference>
<dbReference type="PANTHER" id="PTHR24416:SF349">
    <property type="entry name" value="TYROSINE-PROTEIN KINASE RYK"/>
    <property type="match status" value="1"/>
</dbReference>
<dbReference type="Pfam" id="PF07714">
    <property type="entry name" value="PK_Tyr_Ser-Thr"/>
    <property type="match status" value="1"/>
</dbReference>
<dbReference type="Pfam" id="PF02019">
    <property type="entry name" value="WIF"/>
    <property type="match status" value="1"/>
</dbReference>
<dbReference type="PRINTS" id="PR00109">
    <property type="entry name" value="TYRKINASE"/>
</dbReference>
<dbReference type="SMART" id="SM00469">
    <property type="entry name" value="WIF"/>
    <property type="match status" value="1"/>
</dbReference>
<dbReference type="SUPFAM" id="SSF56112">
    <property type="entry name" value="Protein kinase-like (PK-like)"/>
    <property type="match status" value="1"/>
</dbReference>
<dbReference type="PROSITE" id="PS50011">
    <property type="entry name" value="PROTEIN_KINASE_DOM"/>
    <property type="match status" value="1"/>
</dbReference>
<dbReference type="PROSITE" id="PS00109">
    <property type="entry name" value="PROTEIN_KINASE_TYR"/>
    <property type="match status" value="1"/>
</dbReference>
<dbReference type="PROSITE" id="PS50814">
    <property type="entry name" value="WIF"/>
    <property type="match status" value="1"/>
</dbReference>
<reference evidence="9" key="1">
    <citation type="journal article" date="1998" name="Mech. Dev.">
        <title>Embryonic expression and activity of doughnut, a second RYK homolog in Drosophila.</title>
        <authorList>
            <person name="Oates A.C."/>
            <person name="Bonkovsky J.L."/>
            <person name="Irvine D.V."/>
            <person name="Kelly L.E."/>
            <person name="Thomas J.B."/>
            <person name="Wilks A.F."/>
        </authorList>
    </citation>
    <scope>NUCLEOTIDE SEQUENCE [MRNA]</scope>
    <scope>FUNCTION</scope>
    <scope>TISSUE SPECIFICITY</scope>
    <scope>DEVELOPMENTAL STAGE</scope>
    <source>
        <tissue>Embryo</tissue>
    </source>
</reference>
<reference evidence="9" key="2">
    <citation type="journal article" date="1999" name="Gene">
        <title>A Drosophila derailed homolog, doughnut, expressed in invaginating cells during embryogenesis.</title>
        <authorList>
            <person name="Savant-Bhonsale S."/>
            <person name="Friese M."/>
            <person name="McCoon P."/>
            <person name="Montell D.J."/>
        </authorList>
    </citation>
    <scope>NUCLEOTIDE SEQUENCE [MRNA]</scope>
    <scope>TISSUE SPECIFICITY</scope>
    <scope>DEVELOPMENTAL STAGE</scope>
</reference>
<reference evidence="9" key="3">
    <citation type="journal article" date="2000" name="Science">
        <title>The genome sequence of Drosophila melanogaster.</title>
        <authorList>
            <person name="Adams M.D."/>
            <person name="Celniker S.E."/>
            <person name="Holt R.A."/>
            <person name="Evans C.A."/>
            <person name="Gocayne J.D."/>
            <person name="Amanatides P.G."/>
            <person name="Scherer S.E."/>
            <person name="Li P.W."/>
            <person name="Hoskins R.A."/>
            <person name="Galle R.F."/>
            <person name="George R.A."/>
            <person name="Lewis S.E."/>
            <person name="Richards S."/>
            <person name="Ashburner M."/>
            <person name="Henderson S.N."/>
            <person name="Sutton G.G."/>
            <person name="Wortman J.R."/>
            <person name="Yandell M.D."/>
            <person name="Zhang Q."/>
            <person name="Chen L.X."/>
            <person name="Brandon R.C."/>
            <person name="Rogers Y.-H.C."/>
            <person name="Blazej R.G."/>
            <person name="Champe M."/>
            <person name="Pfeiffer B.D."/>
            <person name="Wan K.H."/>
            <person name="Doyle C."/>
            <person name="Baxter E.G."/>
            <person name="Helt G."/>
            <person name="Nelson C.R."/>
            <person name="Miklos G.L.G."/>
            <person name="Abril J.F."/>
            <person name="Agbayani A."/>
            <person name="An H.-J."/>
            <person name="Andrews-Pfannkoch C."/>
            <person name="Baldwin D."/>
            <person name="Ballew R.M."/>
            <person name="Basu A."/>
            <person name="Baxendale J."/>
            <person name="Bayraktaroglu L."/>
            <person name="Beasley E.M."/>
            <person name="Beeson K.Y."/>
            <person name="Benos P.V."/>
            <person name="Berman B.P."/>
            <person name="Bhandari D."/>
            <person name="Bolshakov S."/>
            <person name="Borkova D."/>
            <person name="Botchan M.R."/>
            <person name="Bouck J."/>
            <person name="Brokstein P."/>
            <person name="Brottier P."/>
            <person name="Burtis K.C."/>
            <person name="Busam D.A."/>
            <person name="Butler H."/>
            <person name="Cadieu E."/>
            <person name="Center A."/>
            <person name="Chandra I."/>
            <person name="Cherry J.M."/>
            <person name="Cawley S."/>
            <person name="Dahlke C."/>
            <person name="Davenport L.B."/>
            <person name="Davies P."/>
            <person name="de Pablos B."/>
            <person name="Delcher A."/>
            <person name="Deng Z."/>
            <person name="Mays A.D."/>
            <person name="Dew I."/>
            <person name="Dietz S.M."/>
            <person name="Dodson K."/>
            <person name="Doup L.E."/>
            <person name="Downes M."/>
            <person name="Dugan-Rocha S."/>
            <person name="Dunkov B.C."/>
            <person name="Dunn P."/>
            <person name="Durbin K.J."/>
            <person name="Evangelista C.C."/>
            <person name="Ferraz C."/>
            <person name="Ferriera S."/>
            <person name="Fleischmann W."/>
            <person name="Fosler C."/>
            <person name="Gabrielian A.E."/>
            <person name="Garg N.S."/>
            <person name="Gelbart W.M."/>
            <person name="Glasser K."/>
            <person name="Glodek A."/>
            <person name="Gong F."/>
            <person name="Gorrell J.H."/>
            <person name="Gu Z."/>
            <person name="Guan P."/>
            <person name="Harris M."/>
            <person name="Harris N.L."/>
            <person name="Harvey D.A."/>
            <person name="Heiman T.J."/>
            <person name="Hernandez J.R."/>
            <person name="Houck J."/>
            <person name="Hostin D."/>
            <person name="Houston K.A."/>
            <person name="Howland T.J."/>
            <person name="Wei M.-H."/>
            <person name="Ibegwam C."/>
            <person name="Jalali M."/>
            <person name="Kalush F."/>
            <person name="Karpen G.H."/>
            <person name="Ke Z."/>
            <person name="Kennison J.A."/>
            <person name="Ketchum K.A."/>
            <person name="Kimmel B.E."/>
            <person name="Kodira C.D."/>
            <person name="Kraft C.L."/>
            <person name="Kravitz S."/>
            <person name="Kulp D."/>
            <person name="Lai Z."/>
            <person name="Lasko P."/>
            <person name="Lei Y."/>
            <person name="Levitsky A.A."/>
            <person name="Li J.H."/>
            <person name="Li Z."/>
            <person name="Liang Y."/>
            <person name="Lin X."/>
            <person name="Liu X."/>
            <person name="Mattei B."/>
            <person name="McIntosh T.C."/>
            <person name="McLeod M.P."/>
            <person name="McPherson D."/>
            <person name="Merkulov G."/>
            <person name="Milshina N.V."/>
            <person name="Mobarry C."/>
            <person name="Morris J."/>
            <person name="Moshrefi A."/>
            <person name="Mount S.M."/>
            <person name="Moy M."/>
            <person name="Murphy B."/>
            <person name="Murphy L."/>
            <person name="Muzny D.M."/>
            <person name="Nelson D.L."/>
            <person name="Nelson D.R."/>
            <person name="Nelson K.A."/>
            <person name="Nixon K."/>
            <person name="Nusskern D.R."/>
            <person name="Pacleb J.M."/>
            <person name="Palazzolo M."/>
            <person name="Pittman G.S."/>
            <person name="Pan S."/>
            <person name="Pollard J."/>
            <person name="Puri V."/>
            <person name="Reese M.G."/>
            <person name="Reinert K."/>
            <person name="Remington K."/>
            <person name="Saunders R.D.C."/>
            <person name="Scheeler F."/>
            <person name="Shen H."/>
            <person name="Shue B.C."/>
            <person name="Siden-Kiamos I."/>
            <person name="Simpson M."/>
            <person name="Skupski M.P."/>
            <person name="Smith T.J."/>
            <person name="Spier E."/>
            <person name="Spradling A.C."/>
            <person name="Stapleton M."/>
            <person name="Strong R."/>
            <person name="Sun E."/>
            <person name="Svirskas R."/>
            <person name="Tector C."/>
            <person name="Turner R."/>
            <person name="Venter E."/>
            <person name="Wang A.H."/>
            <person name="Wang X."/>
            <person name="Wang Z.-Y."/>
            <person name="Wassarman D.A."/>
            <person name="Weinstock G.M."/>
            <person name="Weissenbach J."/>
            <person name="Williams S.M."/>
            <person name="Woodage T."/>
            <person name="Worley K.C."/>
            <person name="Wu D."/>
            <person name="Yang S."/>
            <person name="Yao Q.A."/>
            <person name="Ye J."/>
            <person name="Yeh R.-F."/>
            <person name="Zaveri J.S."/>
            <person name="Zhan M."/>
            <person name="Zhang G."/>
            <person name="Zhao Q."/>
            <person name="Zheng L."/>
            <person name="Zheng X.H."/>
            <person name="Zhong F.N."/>
            <person name="Zhong W."/>
            <person name="Zhou X."/>
            <person name="Zhu S.C."/>
            <person name="Zhu X."/>
            <person name="Smith H.O."/>
            <person name="Gibbs R.A."/>
            <person name="Myers E.W."/>
            <person name="Rubin G.M."/>
            <person name="Venter J.C."/>
        </authorList>
    </citation>
    <scope>NUCLEOTIDE SEQUENCE [LARGE SCALE GENOMIC DNA]</scope>
    <source>
        <strain>Berkeley</strain>
    </source>
</reference>
<reference key="4">
    <citation type="journal article" date="2002" name="Genome Biol.">
        <title>Annotation of the Drosophila melanogaster euchromatic genome: a systematic review.</title>
        <authorList>
            <person name="Misra S."/>
            <person name="Crosby M.A."/>
            <person name="Mungall C.J."/>
            <person name="Matthews B.B."/>
            <person name="Campbell K.S."/>
            <person name="Hradecky P."/>
            <person name="Huang Y."/>
            <person name="Kaminker J.S."/>
            <person name="Millburn G.H."/>
            <person name="Prochnik S.E."/>
            <person name="Smith C.D."/>
            <person name="Tupy J.L."/>
            <person name="Whitfield E.J."/>
            <person name="Bayraktaroglu L."/>
            <person name="Berman B.P."/>
            <person name="Bettencourt B.R."/>
            <person name="Celniker S.E."/>
            <person name="de Grey A.D.N.J."/>
            <person name="Drysdale R.A."/>
            <person name="Harris N.L."/>
            <person name="Richter J."/>
            <person name="Russo S."/>
            <person name="Schroeder A.J."/>
            <person name="Shu S.Q."/>
            <person name="Stapleton M."/>
            <person name="Yamada C."/>
            <person name="Ashburner M."/>
            <person name="Gelbart W.M."/>
            <person name="Rubin G.M."/>
            <person name="Lewis S.E."/>
        </authorList>
    </citation>
    <scope>GENOME REANNOTATION</scope>
    <source>
        <strain>Berkeley</strain>
    </source>
</reference>
<reference key="5">
    <citation type="submission" date="2009-01" db="EMBL/GenBank/DDBJ databases">
        <authorList>
            <person name="Stapleton M."/>
            <person name="Carlson J.W."/>
            <person name="Booth B."/>
            <person name="Chavez C."/>
            <person name="Frise E."/>
            <person name="George R.A."/>
            <person name="Pacleb J.M."/>
            <person name="Park S."/>
            <person name="Wan K.H."/>
            <person name="Yu C."/>
            <person name="Rubin G.M."/>
            <person name="Celniker S.E."/>
        </authorList>
    </citation>
    <scope>NUCLEOTIDE SEQUENCE [LARGE SCALE MRNA]</scope>
    <source>
        <strain>Berkeley</strain>
        <tissue>Embryo</tissue>
    </source>
</reference>
<reference key="6">
    <citation type="journal article" date="2002" name="Genome Biol.">
        <title>A Drosophila full-length cDNA resource.</title>
        <authorList>
            <person name="Stapleton M."/>
            <person name="Carlson J.W."/>
            <person name="Brokstein P."/>
            <person name="Yu C."/>
            <person name="Champe M."/>
            <person name="George R.A."/>
            <person name="Guarin H."/>
            <person name="Kronmiller B."/>
            <person name="Pacleb J.M."/>
            <person name="Park S."/>
            <person name="Wan K.H."/>
            <person name="Rubin G.M."/>
            <person name="Celniker S.E."/>
        </authorList>
    </citation>
    <scope>NUCLEOTIDE SEQUENCE [LARGE SCALE MRNA] OF 244-584</scope>
    <source>
        <strain>Berkeley</strain>
        <tissue>Embryo</tissue>
    </source>
</reference>
<name>RYK2_DROME</name>
<organism>
    <name type="scientific">Drosophila melanogaster</name>
    <name type="common">Fruit fly</name>
    <dbReference type="NCBI Taxonomy" id="7227"/>
    <lineage>
        <taxon>Eukaryota</taxon>
        <taxon>Metazoa</taxon>
        <taxon>Ecdysozoa</taxon>
        <taxon>Arthropoda</taxon>
        <taxon>Hexapoda</taxon>
        <taxon>Insecta</taxon>
        <taxon>Pterygota</taxon>
        <taxon>Neoptera</taxon>
        <taxon>Endopterygota</taxon>
        <taxon>Diptera</taxon>
        <taxon>Brachycera</taxon>
        <taxon>Muscomorpha</taxon>
        <taxon>Ephydroidea</taxon>
        <taxon>Drosophilidae</taxon>
        <taxon>Drosophila</taxon>
        <taxon>Sophophora</taxon>
    </lineage>
</organism>
<keyword id="KW-0067">ATP-binding</keyword>
<keyword id="KW-1003">Cell membrane</keyword>
<keyword id="KW-0217">Developmental protein</keyword>
<keyword id="KW-0325">Glycoprotein</keyword>
<keyword id="KW-0418">Kinase</keyword>
<keyword id="KW-0472">Membrane</keyword>
<keyword id="KW-0547">Nucleotide-binding</keyword>
<keyword id="KW-0597">Phosphoprotein</keyword>
<keyword id="KW-0675">Receptor</keyword>
<keyword id="KW-1185">Reference proteome</keyword>
<keyword id="KW-0732">Signal</keyword>
<keyword id="KW-0808">Transferase</keyword>
<keyword id="KW-0812">Transmembrane</keyword>
<keyword id="KW-1133">Transmembrane helix</keyword>
<keyword id="KW-0829">Tyrosine-protein kinase</keyword>
<comment type="function">
    <text evidence="8">May play an essential role in neuronal pathway recognition and ventral muscle attachment site selection.</text>
</comment>
<comment type="catalytic activity">
    <reaction evidence="5">
        <text>L-tyrosyl-[protein] + ATP = O-phospho-L-tyrosyl-[protein] + ADP + H(+)</text>
        <dbReference type="Rhea" id="RHEA:10596"/>
        <dbReference type="Rhea" id="RHEA-COMP:10136"/>
        <dbReference type="Rhea" id="RHEA-COMP:20101"/>
        <dbReference type="ChEBI" id="CHEBI:15378"/>
        <dbReference type="ChEBI" id="CHEBI:30616"/>
        <dbReference type="ChEBI" id="CHEBI:46858"/>
        <dbReference type="ChEBI" id="CHEBI:61978"/>
        <dbReference type="ChEBI" id="CHEBI:456216"/>
        <dbReference type="EC" id="2.7.10.1"/>
    </reaction>
</comment>
<comment type="subcellular location">
    <subcellularLocation>
        <location evidence="9">Cell membrane</location>
        <topology evidence="9">Single-pass membrane protein</topology>
    </subcellularLocation>
</comment>
<comment type="tissue specificity">
    <text evidence="7 8">Expressed in dynamic domains in the embryonic epidermis, many of which border on sites of epithelial invagination into the embryo interior, including ventral furrow, cephalic furrow, fore- and hindgut, optic lobe and tracheal pits. Later in embryogenesis, expression is seen in imaginal tissues.</text>
</comment>
<comment type="developmental stage">
    <text evidence="7 8">Expressed both maternally and zygotically from embryos to adults. High expression is seen in embryos, pupae and adults (highest in early pupae) and low expression in larvae.</text>
</comment>
<comment type="similarity">
    <text evidence="3">Belongs to the protein kinase superfamily. Tyr protein kinase family.</text>
</comment>
<comment type="sequence caution" evidence="9">
    <conflict type="erroneous initiation">
        <sequence resource="EMBL-CDS" id="AAD31179"/>
    </conflict>
</comment>
<comment type="sequence caution" evidence="9">
    <conflict type="erroneous initiation">
        <sequence resource="EMBL-CDS" id="CAA11918"/>
    </conflict>
</comment>
<feature type="signal peptide" evidence="2">
    <location>
        <begin position="1"/>
        <end position="40"/>
    </location>
</feature>
<feature type="chain" id="PRO_0000024467" description="Tyrosine-protein kinase Dnt">
    <location>
        <begin position="41"/>
        <end position="584"/>
    </location>
</feature>
<feature type="topological domain" description="Extracellular" evidence="2">
    <location>
        <begin position="41"/>
        <end position="208"/>
    </location>
</feature>
<feature type="transmembrane region" description="Helical" evidence="2">
    <location>
        <begin position="209"/>
        <end position="229"/>
    </location>
</feature>
<feature type="topological domain" description="Cytoplasmic" evidence="2">
    <location>
        <begin position="230"/>
        <end position="584"/>
    </location>
</feature>
<feature type="domain" description="WIF" evidence="4">
    <location>
        <begin position="49"/>
        <end position="180"/>
    </location>
</feature>
<feature type="domain" description="Protein kinase" evidence="3">
    <location>
        <begin position="317"/>
        <end position="577"/>
    </location>
</feature>
<feature type="region of interest" description="Disordered" evidence="6">
    <location>
        <begin position="241"/>
        <end position="261"/>
    </location>
</feature>
<feature type="compositionally biased region" description="Polar residues" evidence="6">
    <location>
        <begin position="250"/>
        <end position="261"/>
    </location>
</feature>
<feature type="active site" description="Proton acceptor" evidence="3 5">
    <location>
        <position position="442"/>
    </location>
</feature>
<feature type="binding site" evidence="3">
    <location>
        <begin position="323"/>
        <end position="331"/>
    </location>
    <ligand>
        <name>ATP</name>
        <dbReference type="ChEBI" id="CHEBI:30616"/>
    </ligand>
</feature>
<feature type="binding site" evidence="3">
    <location>
        <position position="345"/>
    </location>
    <ligand>
        <name>ATP</name>
        <dbReference type="ChEBI" id="CHEBI:30616"/>
    </ligand>
</feature>
<feature type="modified residue" description="Phosphotyrosine; by autocatalysis" evidence="1">
    <location>
        <position position="472"/>
    </location>
</feature>
<feature type="glycosylation site" description="N-linked (GlcNAc...) asparagine" evidence="2">
    <location>
        <position position="124"/>
    </location>
</feature>
<feature type="glycosylation site" description="N-linked (GlcNAc...) asparagine" evidence="2">
    <location>
        <position position="163"/>
    </location>
</feature>
<feature type="glycosylation site" description="N-linked (GlcNAc...) asparagine" evidence="2">
    <location>
        <position position="168"/>
    </location>
</feature>
<feature type="glycosylation site" description="N-linked (GlcNAc...) asparagine" evidence="2">
    <location>
        <position position="183"/>
    </location>
</feature>
<feature type="sequence conflict" description="In Ref. 5; AAX33387." evidence="9" ref="5">
    <original>C</original>
    <variation>Y</variation>
    <location>
        <position position="448"/>
    </location>
</feature>
<accession>Q9V422</accession>
<accession>B9EQS2</accession>
<accession>O62533</accession>
<accession>Q5BII5</accession>
<accession>Q95TI0</accession>
<gene>
    <name type="primary">dnt</name>
    <name type="ORF">CG17559</name>
</gene>